<dbReference type="EMBL" id="CP000034">
    <property type="protein sequence ID" value="ABB63451.1"/>
    <property type="molecule type" value="Genomic_DNA"/>
</dbReference>
<dbReference type="RefSeq" id="WP_001029684.1">
    <property type="nucleotide sequence ID" value="NC_007606.1"/>
</dbReference>
<dbReference type="RefSeq" id="YP_404942.1">
    <property type="nucleotide sequence ID" value="NC_007606.1"/>
</dbReference>
<dbReference type="SMR" id="Q32B54"/>
<dbReference type="STRING" id="300267.SDY_3473"/>
<dbReference type="EnsemblBacteria" id="ABB63451">
    <property type="protein sequence ID" value="ABB63451"/>
    <property type="gene ID" value="SDY_3473"/>
</dbReference>
<dbReference type="GeneID" id="93778690"/>
<dbReference type="KEGG" id="sdy:SDY_3473"/>
<dbReference type="PATRIC" id="fig|300267.13.peg.4126"/>
<dbReference type="HOGENOM" id="CLU_072439_5_0_6"/>
<dbReference type="PRO" id="PR:Q32B54"/>
<dbReference type="Proteomes" id="UP000002716">
    <property type="component" value="Chromosome"/>
</dbReference>
<dbReference type="GO" id="GO:1990904">
    <property type="term" value="C:ribonucleoprotein complex"/>
    <property type="evidence" value="ECO:0007669"/>
    <property type="project" value="UniProtKB-KW"/>
</dbReference>
<dbReference type="GO" id="GO:0005840">
    <property type="term" value="C:ribosome"/>
    <property type="evidence" value="ECO:0007669"/>
    <property type="project" value="UniProtKB-KW"/>
</dbReference>
<dbReference type="GO" id="GO:0019843">
    <property type="term" value="F:rRNA binding"/>
    <property type="evidence" value="ECO:0007669"/>
    <property type="project" value="UniProtKB-UniRule"/>
</dbReference>
<dbReference type="GO" id="GO:0003735">
    <property type="term" value="F:structural constituent of ribosome"/>
    <property type="evidence" value="ECO:0007669"/>
    <property type="project" value="InterPro"/>
</dbReference>
<dbReference type="GO" id="GO:0006412">
    <property type="term" value="P:translation"/>
    <property type="evidence" value="ECO:0007669"/>
    <property type="project" value="UniProtKB-UniRule"/>
</dbReference>
<dbReference type="FunFam" id="3.30.420.80:FF:000001">
    <property type="entry name" value="30S ribosomal protein S11"/>
    <property type="match status" value="1"/>
</dbReference>
<dbReference type="Gene3D" id="3.30.420.80">
    <property type="entry name" value="Ribosomal protein S11"/>
    <property type="match status" value="1"/>
</dbReference>
<dbReference type="HAMAP" id="MF_01310">
    <property type="entry name" value="Ribosomal_uS11"/>
    <property type="match status" value="1"/>
</dbReference>
<dbReference type="InterPro" id="IPR001971">
    <property type="entry name" value="Ribosomal_uS11"/>
</dbReference>
<dbReference type="InterPro" id="IPR019981">
    <property type="entry name" value="Ribosomal_uS11_bac-type"/>
</dbReference>
<dbReference type="InterPro" id="IPR018102">
    <property type="entry name" value="Ribosomal_uS11_CS"/>
</dbReference>
<dbReference type="InterPro" id="IPR036967">
    <property type="entry name" value="Ribosomal_uS11_sf"/>
</dbReference>
<dbReference type="NCBIfam" id="NF003698">
    <property type="entry name" value="PRK05309.1"/>
    <property type="match status" value="1"/>
</dbReference>
<dbReference type="NCBIfam" id="TIGR03632">
    <property type="entry name" value="uS11_bact"/>
    <property type="match status" value="1"/>
</dbReference>
<dbReference type="PANTHER" id="PTHR11759">
    <property type="entry name" value="40S RIBOSOMAL PROTEIN S14/30S RIBOSOMAL PROTEIN S11"/>
    <property type="match status" value="1"/>
</dbReference>
<dbReference type="Pfam" id="PF00411">
    <property type="entry name" value="Ribosomal_S11"/>
    <property type="match status" value="1"/>
</dbReference>
<dbReference type="PIRSF" id="PIRSF002131">
    <property type="entry name" value="Ribosomal_S11"/>
    <property type="match status" value="1"/>
</dbReference>
<dbReference type="SUPFAM" id="SSF53137">
    <property type="entry name" value="Translational machinery components"/>
    <property type="match status" value="1"/>
</dbReference>
<dbReference type="PROSITE" id="PS00054">
    <property type="entry name" value="RIBOSOMAL_S11"/>
    <property type="match status" value="1"/>
</dbReference>
<accession>Q32B54</accession>
<feature type="chain" id="PRO_0000230430" description="Small ribosomal subunit protein uS11">
    <location>
        <begin position="1"/>
        <end position="129"/>
    </location>
</feature>
<organism>
    <name type="scientific">Shigella dysenteriae serotype 1 (strain Sd197)</name>
    <dbReference type="NCBI Taxonomy" id="300267"/>
    <lineage>
        <taxon>Bacteria</taxon>
        <taxon>Pseudomonadati</taxon>
        <taxon>Pseudomonadota</taxon>
        <taxon>Gammaproteobacteria</taxon>
        <taxon>Enterobacterales</taxon>
        <taxon>Enterobacteriaceae</taxon>
        <taxon>Shigella</taxon>
    </lineage>
</organism>
<keyword id="KW-1185">Reference proteome</keyword>
<keyword id="KW-0687">Ribonucleoprotein</keyword>
<keyword id="KW-0689">Ribosomal protein</keyword>
<keyword id="KW-0694">RNA-binding</keyword>
<keyword id="KW-0699">rRNA-binding</keyword>
<reference key="1">
    <citation type="journal article" date="2005" name="Nucleic Acids Res.">
        <title>Genome dynamics and diversity of Shigella species, the etiologic agents of bacillary dysentery.</title>
        <authorList>
            <person name="Yang F."/>
            <person name="Yang J."/>
            <person name="Zhang X."/>
            <person name="Chen L."/>
            <person name="Jiang Y."/>
            <person name="Yan Y."/>
            <person name="Tang X."/>
            <person name="Wang J."/>
            <person name="Xiong Z."/>
            <person name="Dong J."/>
            <person name="Xue Y."/>
            <person name="Zhu Y."/>
            <person name="Xu X."/>
            <person name="Sun L."/>
            <person name="Chen S."/>
            <person name="Nie H."/>
            <person name="Peng J."/>
            <person name="Xu J."/>
            <person name="Wang Y."/>
            <person name="Yuan Z."/>
            <person name="Wen Y."/>
            <person name="Yao Z."/>
            <person name="Shen Y."/>
            <person name="Qiang B."/>
            <person name="Hou Y."/>
            <person name="Yu J."/>
            <person name="Jin Q."/>
        </authorList>
    </citation>
    <scope>NUCLEOTIDE SEQUENCE [LARGE SCALE GENOMIC DNA]</scope>
    <source>
        <strain>Sd197</strain>
    </source>
</reference>
<name>RS11_SHIDS</name>
<gene>
    <name evidence="1" type="primary">rpsK</name>
    <name type="ordered locus">SDY_3473</name>
</gene>
<sequence length="129" mass="13845">MAKAPIRARKRVRKQVSDGVAHIHASFNNTIVTITDRQGNALGWATAGGSGFRGSRKSTPFAAQVAAERCADAVKEYGIKNLEVMVKGPGPGRESTIRALNAAGFRITNITDVTPIPHNGCRPPKKRRV</sequence>
<proteinExistence type="inferred from homology"/>
<protein>
    <recommendedName>
        <fullName evidence="1">Small ribosomal subunit protein uS11</fullName>
    </recommendedName>
    <alternativeName>
        <fullName evidence="2">30S ribosomal protein S11</fullName>
    </alternativeName>
</protein>
<evidence type="ECO:0000255" key="1">
    <source>
        <dbReference type="HAMAP-Rule" id="MF_01310"/>
    </source>
</evidence>
<evidence type="ECO:0000305" key="2"/>
<comment type="function">
    <text evidence="1">Located on the platform of the 30S subunit, it bridges several disparate RNA helices of the 16S rRNA. Forms part of the Shine-Dalgarno cleft in the 70S ribosome.</text>
</comment>
<comment type="subunit">
    <text evidence="1">Part of the 30S ribosomal subunit. Interacts with proteins S7 and S18. Binds to IF-3.</text>
</comment>
<comment type="similarity">
    <text evidence="1">Belongs to the universal ribosomal protein uS11 family.</text>
</comment>